<accession>A5GI51</accession>
<protein>
    <recommendedName>
        <fullName evidence="1">Phosphomethylpyrimidine synthase</fullName>
        <ecNumber evidence="1">4.1.99.17</ecNumber>
    </recommendedName>
    <alternativeName>
        <fullName evidence="1">Hydroxymethylpyrimidine phosphate synthase</fullName>
        <shortName evidence="1">HMP-P synthase</shortName>
        <shortName evidence="1">HMP-phosphate synthase</shortName>
        <shortName evidence="1">HMPP synthase</shortName>
    </alternativeName>
    <alternativeName>
        <fullName evidence="1">Thiamine biosynthesis protein ThiC</fullName>
    </alternativeName>
</protein>
<reference key="1">
    <citation type="submission" date="2006-05" db="EMBL/GenBank/DDBJ databases">
        <authorList>
            <consortium name="Genoscope"/>
        </authorList>
    </citation>
    <scope>NUCLEOTIDE SEQUENCE [LARGE SCALE GENOMIC DNA]</scope>
    <source>
        <strain>WH7803</strain>
    </source>
</reference>
<gene>
    <name evidence="1" type="primary">thiC</name>
    <name type="ordered locus">SynWH7803_0190</name>
</gene>
<dbReference type="EC" id="4.1.99.17" evidence="1"/>
<dbReference type="EMBL" id="CT971583">
    <property type="protein sequence ID" value="CAK22616.1"/>
    <property type="molecule type" value="Genomic_DNA"/>
</dbReference>
<dbReference type="SMR" id="A5GI51"/>
<dbReference type="STRING" id="32051.SynWH7803_0190"/>
<dbReference type="KEGG" id="syx:SynWH7803_0190"/>
<dbReference type="eggNOG" id="COG0422">
    <property type="taxonomic scope" value="Bacteria"/>
</dbReference>
<dbReference type="HOGENOM" id="CLU_013181_2_1_3"/>
<dbReference type="OrthoDB" id="9805897at2"/>
<dbReference type="UniPathway" id="UPA00060"/>
<dbReference type="Proteomes" id="UP000001566">
    <property type="component" value="Chromosome"/>
</dbReference>
<dbReference type="GO" id="GO:0005829">
    <property type="term" value="C:cytosol"/>
    <property type="evidence" value="ECO:0007669"/>
    <property type="project" value="TreeGrafter"/>
</dbReference>
<dbReference type="GO" id="GO:0051539">
    <property type="term" value="F:4 iron, 4 sulfur cluster binding"/>
    <property type="evidence" value="ECO:0007669"/>
    <property type="project" value="UniProtKB-KW"/>
</dbReference>
<dbReference type="GO" id="GO:0016830">
    <property type="term" value="F:carbon-carbon lyase activity"/>
    <property type="evidence" value="ECO:0007669"/>
    <property type="project" value="InterPro"/>
</dbReference>
<dbReference type="GO" id="GO:0008270">
    <property type="term" value="F:zinc ion binding"/>
    <property type="evidence" value="ECO:0007669"/>
    <property type="project" value="UniProtKB-UniRule"/>
</dbReference>
<dbReference type="GO" id="GO:0009228">
    <property type="term" value="P:thiamine biosynthetic process"/>
    <property type="evidence" value="ECO:0007669"/>
    <property type="project" value="UniProtKB-KW"/>
</dbReference>
<dbReference type="GO" id="GO:0009229">
    <property type="term" value="P:thiamine diphosphate biosynthetic process"/>
    <property type="evidence" value="ECO:0007669"/>
    <property type="project" value="UniProtKB-UniRule"/>
</dbReference>
<dbReference type="FunFam" id="3.20.20.540:FF:000001">
    <property type="entry name" value="Phosphomethylpyrimidine synthase"/>
    <property type="match status" value="1"/>
</dbReference>
<dbReference type="Gene3D" id="6.10.250.620">
    <property type="match status" value="1"/>
</dbReference>
<dbReference type="Gene3D" id="3.20.20.540">
    <property type="entry name" value="Radical SAM ThiC family, central domain"/>
    <property type="match status" value="1"/>
</dbReference>
<dbReference type="HAMAP" id="MF_00089">
    <property type="entry name" value="ThiC"/>
    <property type="match status" value="1"/>
</dbReference>
<dbReference type="InterPro" id="IPR037509">
    <property type="entry name" value="ThiC"/>
</dbReference>
<dbReference type="InterPro" id="IPR038521">
    <property type="entry name" value="ThiC/Bza_core_dom"/>
</dbReference>
<dbReference type="InterPro" id="IPR002817">
    <property type="entry name" value="ThiC/BzaA/B"/>
</dbReference>
<dbReference type="NCBIfam" id="NF006763">
    <property type="entry name" value="PRK09284.1"/>
    <property type="match status" value="1"/>
</dbReference>
<dbReference type="NCBIfam" id="NF009895">
    <property type="entry name" value="PRK13352.1"/>
    <property type="match status" value="1"/>
</dbReference>
<dbReference type="NCBIfam" id="TIGR00190">
    <property type="entry name" value="thiC"/>
    <property type="match status" value="1"/>
</dbReference>
<dbReference type="PANTHER" id="PTHR30557:SF1">
    <property type="entry name" value="PHOSPHOMETHYLPYRIMIDINE SYNTHASE, CHLOROPLASTIC"/>
    <property type="match status" value="1"/>
</dbReference>
<dbReference type="PANTHER" id="PTHR30557">
    <property type="entry name" value="THIAMINE BIOSYNTHESIS PROTEIN THIC"/>
    <property type="match status" value="1"/>
</dbReference>
<dbReference type="Pfam" id="PF01964">
    <property type="entry name" value="ThiC_Rad_SAM"/>
    <property type="match status" value="1"/>
</dbReference>
<dbReference type="SFLD" id="SFLDF00407">
    <property type="entry name" value="phosphomethylpyrimidine_syntha"/>
    <property type="match status" value="1"/>
</dbReference>
<dbReference type="SFLD" id="SFLDG01114">
    <property type="entry name" value="phosphomethylpyrimidine_syntha"/>
    <property type="match status" value="1"/>
</dbReference>
<dbReference type="SFLD" id="SFLDS00113">
    <property type="entry name" value="Radical_SAM_Phosphomethylpyrim"/>
    <property type="match status" value="1"/>
</dbReference>
<comment type="function">
    <text evidence="1">Catalyzes the synthesis of the hydroxymethylpyrimidine phosphate (HMP-P) moiety of thiamine from aminoimidazole ribotide (AIR) in a radical S-adenosyl-L-methionine (SAM)-dependent reaction.</text>
</comment>
<comment type="catalytic activity">
    <reaction evidence="1">
        <text>5-amino-1-(5-phospho-beta-D-ribosyl)imidazole + S-adenosyl-L-methionine = 4-amino-2-methyl-5-(phosphooxymethyl)pyrimidine + CO + 5'-deoxyadenosine + formate + L-methionine + 3 H(+)</text>
        <dbReference type="Rhea" id="RHEA:24840"/>
        <dbReference type="ChEBI" id="CHEBI:15378"/>
        <dbReference type="ChEBI" id="CHEBI:15740"/>
        <dbReference type="ChEBI" id="CHEBI:17245"/>
        <dbReference type="ChEBI" id="CHEBI:17319"/>
        <dbReference type="ChEBI" id="CHEBI:57844"/>
        <dbReference type="ChEBI" id="CHEBI:58354"/>
        <dbReference type="ChEBI" id="CHEBI:59789"/>
        <dbReference type="ChEBI" id="CHEBI:137981"/>
        <dbReference type="EC" id="4.1.99.17"/>
    </reaction>
</comment>
<comment type="cofactor">
    <cofactor evidence="1">
        <name>[4Fe-4S] cluster</name>
        <dbReference type="ChEBI" id="CHEBI:49883"/>
    </cofactor>
    <text evidence="1">Binds 1 [4Fe-4S] cluster per subunit. The cluster is coordinated with 3 cysteines and an exchangeable S-adenosyl-L-methionine.</text>
</comment>
<comment type="pathway">
    <text evidence="1">Cofactor biosynthesis; thiamine diphosphate biosynthesis.</text>
</comment>
<comment type="similarity">
    <text evidence="1">Belongs to the ThiC family.</text>
</comment>
<keyword id="KW-0004">4Fe-4S</keyword>
<keyword id="KW-0408">Iron</keyword>
<keyword id="KW-0411">Iron-sulfur</keyword>
<keyword id="KW-0456">Lyase</keyword>
<keyword id="KW-0479">Metal-binding</keyword>
<keyword id="KW-1185">Reference proteome</keyword>
<keyword id="KW-0949">S-adenosyl-L-methionine</keyword>
<keyword id="KW-0784">Thiamine biosynthesis</keyword>
<keyword id="KW-0862">Zinc</keyword>
<sequence>MRASWVESRRGQANVSQMHFARQGVVTEEMAYVAKRENLPESLVMEEVARGRMIIPANINHTGLEPMAIGIASKCKVNANIGASPNASDAAEEVNKLKLAVKYGADTVMDLSTGGVNLDEVRTAIIDASPVPIGTVPVYQALESVHGSIEKLDEDDFLHIIEKHCQQGVDYQTIHAGLLIEHLPKVKGRLTGIVSRGGGILAQWMLYHHRQNPLFTRFDDICEIFKRYDCTFSLGDSLRPGCQHDASDAAQLAELKTLGELTRRAWAHDVQVMVEGPGHVPLDQIEFNVKKQMEECSEAPFYVLGPLVTDIAPGYDHITSAIGAAMAGWHGTAMLCYVTPKEHLGLPNAEDVREGLIAYKIAAHAADIARHRPGARDRDDELSRARYNFDWNKQFELSLDPERAKEYHDETLPADIYKQAEFCSMCGPKHCPMQTKITDEDLEGLEKVLETKSGAADLAGVKMEKES</sequence>
<feature type="chain" id="PRO_1000004808" description="Phosphomethylpyrimidine synthase">
    <location>
        <begin position="1"/>
        <end position="467"/>
    </location>
</feature>
<feature type="binding site" evidence="1">
    <location>
        <position position="80"/>
    </location>
    <ligand>
        <name>substrate</name>
    </ligand>
</feature>
<feature type="binding site" evidence="1">
    <location>
        <position position="109"/>
    </location>
    <ligand>
        <name>substrate</name>
    </ligand>
</feature>
<feature type="binding site" evidence="1">
    <location>
        <position position="139"/>
    </location>
    <ligand>
        <name>substrate</name>
    </ligand>
</feature>
<feature type="binding site" evidence="1">
    <location>
        <position position="175"/>
    </location>
    <ligand>
        <name>substrate</name>
    </ligand>
</feature>
<feature type="binding site" evidence="1">
    <location>
        <begin position="195"/>
        <end position="197"/>
    </location>
    <ligand>
        <name>substrate</name>
    </ligand>
</feature>
<feature type="binding site" evidence="1">
    <location>
        <begin position="236"/>
        <end position="239"/>
    </location>
    <ligand>
        <name>substrate</name>
    </ligand>
</feature>
<feature type="binding site" evidence="1">
    <location>
        <position position="275"/>
    </location>
    <ligand>
        <name>substrate</name>
    </ligand>
</feature>
<feature type="binding site" evidence="1">
    <location>
        <position position="279"/>
    </location>
    <ligand>
        <name>Zn(2+)</name>
        <dbReference type="ChEBI" id="CHEBI:29105"/>
    </ligand>
</feature>
<feature type="binding site" evidence="1">
    <location>
        <position position="302"/>
    </location>
    <ligand>
        <name>substrate</name>
    </ligand>
</feature>
<feature type="binding site" evidence="1">
    <location>
        <position position="343"/>
    </location>
    <ligand>
        <name>Zn(2+)</name>
        <dbReference type="ChEBI" id="CHEBI:29105"/>
    </ligand>
</feature>
<feature type="binding site" evidence="1">
    <location>
        <position position="423"/>
    </location>
    <ligand>
        <name>[4Fe-4S] cluster</name>
        <dbReference type="ChEBI" id="CHEBI:49883"/>
        <note>4Fe-4S-S-AdoMet</note>
    </ligand>
</feature>
<feature type="binding site" evidence="1">
    <location>
        <position position="426"/>
    </location>
    <ligand>
        <name>[4Fe-4S] cluster</name>
        <dbReference type="ChEBI" id="CHEBI:49883"/>
        <note>4Fe-4S-S-AdoMet</note>
    </ligand>
</feature>
<feature type="binding site" evidence="1">
    <location>
        <position position="431"/>
    </location>
    <ligand>
        <name>[4Fe-4S] cluster</name>
        <dbReference type="ChEBI" id="CHEBI:49883"/>
        <note>4Fe-4S-S-AdoMet</note>
    </ligand>
</feature>
<proteinExistence type="inferred from homology"/>
<name>THIC_SYNPW</name>
<evidence type="ECO:0000255" key="1">
    <source>
        <dbReference type="HAMAP-Rule" id="MF_00089"/>
    </source>
</evidence>
<organism>
    <name type="scientific">Synechococcus sp. (strain WH7803)</name>
    <dbReference type="NCBI Taxonomy" id="32051"/>
    <lineage>
        <taxon>Bacteria</taxon>
        <taxon>Bacillati</taxon>
        <taxon>Cyanobacteriota</taxon>
        <taxon>Cyanophyceae</taxon>
        <taxon>Synechococcales</taxon>
        <taxon>Synechococcaceae</taxon>
        <taxon>Synechococcus</taxon>
    </lineage>
</organism>